<sequence length="208" mass="23866">MEPVKMTNSSDDFTQSAEPFKLFAEWLADAAKSEPNDPNAVALATVDPDGLPNVRMVLLKDFDETGFVFYTNYESKKGQEILSAEKAAMCFHWKSLRRQVRVRGPVEKVSDAEADAYYASRPRGSRIGAWASKQSRPLESRFALEKAVAEYTAKYAIGDIPRPPYWSGFRIRPVSIEFWHDRPFRLHDRVLFTRPTPEGDWNKDRLYP</sequence>
<organism>
    <name type="scientific">Brucella melitensis biotype 1 (strain ATCC 23456 / CCUG 17765 / NCTC 10094 / 16M)</name>
    <dbReference type="NCBI Taxonomy" id="224914"/>
    <lineage>
        <taxon>Bacteria</taxon>
        <taxon>Pseudomonadati</taxon>
        <taxon>Pseudomonadota</taxon>
        <taxon>Alphaproteobacteria</taxon>
        <taxon>Hyphomicrobiales</taxon>
        <taxon>Brucellaceae</taxon>
        <taxon>Brucella/Ochrobactrum group</taxon>
        <taxon>Brucella</taxon>
    </lineage>
</organism>
<proteinExistence type="inferred from homology"/>
<reference key="1">
    <citation type="journal article" date="2002" name="Proc. Natl. Acad. Sci. U.S.A.">
        <title>The genome sequence of the facultative intracellular pathogen Brucella melitensis.</title>
        <authorList>
            <person name="DelVecchio V.G."/>
            <person name="Kapatral V."/>
            <person name="Redkar R.J."/>
            <person name="Patra G."/>
            <person name="Mujer C."/>
            <person name="Los T."/>
            <person name="Ivanova N."/>
            <person name="Anderson I."/>
            <person name="Bhattacharyya A."/>
            <person name="Lykidis A."/>
            <person name="Reznik G."/>
            <person name="Jablonski L."/>
            <person name="Larsen N."/>
            <person name="D'Souza M."/>
            <person name="Bernal A."/>
            <person name="Mazur M."/>
            <person name="Goltsman E."/>
            <person name="Selkov E."/>
            <person name="Elzer P.H."/>
            <person name="Hagius S."/>
            <person name="O'Callaghan D."/>
            <person name="Letesson J.-J."/>
            <person name="Haselkorn R."/>
            <person name="Kyrpides N.C."/>
            <person name="Overbeek R."/>
        </authorList>
    </citation>
    <scope>NUCLEOTIDE SEQUENCE [LARGE SCALE GENOMIC DNA]</scope>
    <source>
        <strain>ATCC 23456 / CCUG 17765 / NCTC 10094 / 16M</strain>
    </source>
</reference>
<accession>Q8YFK3</accession>
<protein>
    <recommendedName>
        <fullName evidence="1">Pyridoxine/pyridoxamine 5'-phosphate oxidase</fullName>
        <ecNumber evidence="1">1.4.3.5</ecNumber>
    </recommendedName>
    <alternativeName>
        <fullName evidence="1">PNP/PMP oxidase</fullName>
        <shortName evidence="1">PNPOx</shortName>
    </alternativeName>
    <alternativeName>
        <fullName evidence="1">Pyridoxal 5'-phosphate synthase</fullName>
    </alternativeName>
</protein>
<gene>
    <name evidence="1" type="primary">pdxH</name>
    <name type="ordered locus">BMEI1517</name>
</gene>
<evidence type="ECO:0000255" key="1">
    <source>
        <dbReference type="HAMAP-Rule" id="MF_01629"/>
    </source>
</evidence>
<feature type="chain" id="PRO_0000167693" description="Pyridoxine/pyridoxamine 5'-phosphate oxidase">
    <location>
        <begin position="1"/>
        <end position="208"/>
    </location>
</feature>
<feature type="binding site" evidence="1">
    <location>
        <begin position="55"/>
        <end position="60"/>
    </location>
    <ligand>
        <name>FMN</name>
        <dbReference type="ChEBI" id="CHEBI:58210"/>
    </ligand>
</feature>
<feature type="binding site" evidence="1">
    <location>
        <position position="60"/>
    </location>
    <ligand>
        <name>substrate</name>
    </ligand>
</feature>
<feature type="binding site" evidence="1">
    <location>
        <begin position="70"/>
        <end position="71"/>
    </location>
    <ligand>
        <name>FMN</name>
        <dbReference type="ChEBI" id="CHEBI:58210"/>
    </ligand>
</feature>
<feature type="binding site" evidence="1">
    <location>
        <position position="76"/>
    </location>
    <ligand>
        <name>FMN</name>
        <dbReference type="ChEBI" id="CHEBI:58210"/>
    </ligand>
</feature>
<feature type="binding site" evidence="1">
    <location>
        <position position="77"/>
    </location>
    <ligand>
        <name>FMN</name>
        <dbReference type="ChEBI" id="CHEBI:58210"/>
    </ligand>
</feature>
<feature type="binding site" evidence="1">
    <location>
        <position position="99"/>
    </location>
    <ligand>
        <name>FMN</name>
        <dbReference type="ChEBI" id="CHEBI:58210"/>
    </ligand>
</feature>
<feature type="binding site" evidence="1">
    <location>
        <position position="117"/>
    </location>
    <ligand>
        <name>substrate</name>
    </ligand>
</feature>
<feature type="binding site" evidence="1">
    <location>
        <position position="121"/>
    </location>
    <ligand>
        <name>substrate</name>
    </ligand>
</feature>
<feature type="binding site" evidence="1">
    <location>
        <position position="125"/>
    </location>
    <ligand>
        <name>substrate</name>
    </ligand>
</feature>
<feature type="binding site" evidence="1">
    <location>
        <begin position="134"/>
        <end position="135"/>
    </location>
    <ligand>
        <name>FMN</name>
        <dbReference type="ChEBI" id="CHEBI:58210"/>
    </ligand>
</feature>
<feature type="binding site" evidence="1">
    <location>
        <position position="179"/>
    </location>
    <ligand>
        <name>FMN</name>
        <dbReference type="ChEBI" id="CHEBI:58210"/>
    </ligand>
</feature>
<feature type="binding site" evidence="1">
    <location>
        <begin position="185"/>
        <end position="187"/>
    </location>
    <ligand>
        <name>substrate</name>
    </ligand>
</feature>
<feature type="binding site" evidence="1">
    <location>
        <position position="189"/>
    </location>
    <ligand>
        <name>FMN</name>
        <dbReference type="ChEBI" id="CHEBI:58210"/>
    </ligand>
</feature>
<comment type="function">
    <text evidence="1">Catalyzes the oxidation of either pyridoxine 5'-phosphate (PNP) or pyridoxamine 5'-phosphate (PMP) into pyridoxal 5'-phosphate (PLP).</text>
</comment>
<comment type="catalytic activity">
    <reaction evidence="1">
        <text>pyridoxamine 5'-phosphate + O2 + H2O = pyridoxal 5'-phosphate + H2O2 + NH4(+)</text>
        <dbReference type="Rhea" id="RHEA:15817"/>
        <dbReference type="ChEBI" id="CHEBI:15377"/>
        <dbReference type="ChEBI" id="CHEBI:15379"/>
        <dbReference type="ChEBI" id="CHEBI:16240"/>
        <dbReference type="ChEBI" id="CHEBI:28938"/>
        <dbReference type="ChEBI" id="CHEBI:58451"/>
        <dbReference type="ChEBI" id="CHEBI:597326"/>
        <dbReference type="EC" id="1.4.3.5"/>
    </reaction>
</comment>
<comment type="catalytic activity">
    <reaction evidence="1">
        <text>pyridoxine 5'-phosphate + O2 = pyridoxal 5'-phosphate + H2O2</text>
        <dbReference type="Rhea" id="RHEA:15149"/>
        <dbReference type="ChEBI" id="CHEBI:15379"/>
        <dbReference type="ChEBI" id="CHEBI:16240"/>
        <dbReference type="ChEBI" id="CHEBI:58589"/>
        <dbReference type="ChEBI" id="CHEBI:597326"/>
        <dbReference type="EC" id="1.4.3.5"/>
    </reaction>
</comment>
<comment type="cofactor">
    <cofactor evidence="1">
        <name>FMN</name>
        <dbReference type="ChEBI" id="CHEBI:58210"/>
    </cofactor>
    <text evidence="1">Binds 1 FMN per subunit.</text>
</comment>
<comment type="pathway">
    <text evidence="1">Cofactor metabolism; pyridoxal 5'-phosphate salvage; pyridoxal 5'-phosphate from pyridoxamine 5'-phosphate: step 1/1.</text>
</comment>
<comment type="pathway">
    <text evidence="1">Cofactor metabolism; pyridoxal 5'-phosphate salvage; pyridoxal 5'-phosphate from pyridoxine 5'-phosphate: step 1/1.</text>
</comment>
<comment type="subunit">
    <text evidence="1">Homodimer.</text>
</comment>
<comment type="similarity">
    <text evidence="1">Belongs to the pyridoxamine 5'-phosphate oxidase family.</text>
</comment>
<dbReference type="EC" id="1.4.3.5" evidence="1"/>
<dbReference type="EMBL" id="AE008917">
    <property type="protein sequence ID" value="AAL52698.1"/>
    <property type="molecule type" value="Genomic_DNA"/>
</dbReference>
<dbReference type="PIR" id="AG3441">
    <property type="entry name" value="AG3441"/>
</dbReference>
<dbReference type="SMR" id="Q8YFK3"/>
<dbReference type="KEGG" id="bme:BMEI1517"/>
<dbReference type="eggNOG" id="COG0259">
    <property type="taxonomic scope" value="Bacteria"/>
</dbReference>
<dbReference type="UniPathway" id="UPA01068">
    <property type="reaction ID" value="UER00304"/>
</dbReference>
<dbReference type="UniPathway" id="UPA01068">
    <property type="reaction ID" value="UER00305"/>
</dbReference>
<dbReference type="Proteomes" id="UP000000419">
    <property type="component" value="Chromosome I"/>
</dbReference>
<dbReference type="GO" id="GO:0010181">
    <property type="term" value="F:FMN binding"/>
    <property type="evidence" value="ECO:0007669"/>
    <property type="project" value="UniProtKB-UniRule"/>
</dbReference>
<dbReference type="GO" id="GO:0004733">
    <property type="term" value="F:pyridoxamine phosphate oxidase activity"/>
    <property type="evidence" value="ECO:0007669"/>
    <property type="project" value="UniProtKB-UniRule"/>
</dbReference>
<dbReference type="GO" id="GO:0008615">
    <property type="term" value="P:pyridoxine biosynthetic process"/>
    <property type="evidence" value="ECO:0007669"/>
    <property type="project" value="UniProtKB-KW"/>
</dbReference>
<dbReference type="Gene3D" id="2.30.110.10">
    <property type="entry name" value="Electron Transport, Fmn-binding Protein, Chain A"/>
    <property type="match status" value="1"/>
</dbReference>
<dbReference type="HAMAP" id="MF_01629">
    <property type="entry name" value="PdxH"/>
    <property type="match status" value="1"/>
</dbReference>
<dbReference type="InterPro" id="IPR000659">
    <property type="entry name" value="Pyridox_Oxase"/>
</dbReference>
<dbReference type="InterPro" id="IPR019740">
    <property type="entry name" value="Pyridox_Oxase_CS"/>
</dbReference>
<dbReference type="InterPro" id="IPR011576">
    <property type="entry name" value="Pyridox_Oxase_N"/>
</dbReference>
<dbReference type="InterPro" id="IPR019576">
    <property type="entry name" value="Pyridoxamine_oxidase_dimer_C"/>
</dbReference>
<dbReference type="InterPro" id="IPR012349">
    <property type="entry name" value="Split_barrel_FMN-bd"/>
</dbReference>
<dbReference type="NCBIfam" id="TIGR00558">
    <property type="entry name" value="pdxH"/>
    <property type="match status" value="1"/>
</dbReference>
<dbReference type="NCBIfam" id="NF004231">
    <property type="entry name" value="PRK05679.1"/>
    <property type="match status" value="1"/>
</dbReference>
<dbReference type="PANTHER" id="PTHR10851:SF0">
    <property type="entry name" value="PYRIDOXINE-5'-PHOSPHATE OXIDASE"/>
    <property type="match status" value="1"/>
</dbReference>
<dbReference type="PANTHER" id="PTHR10851">
    <property type="entry name" value="PYRIDOXINE-5-PHOSPHATE OXIDASE"/>
    <property type="match status" value="1"/>
</dbReference>
<dbReference type="Pfam" id="PF10590">
    <property type="entry name" value="PNP_phzG_C"/>
    <property type="match status" value="1"/>
</dbReference>
<dbReference type="Pfam" id="PF01243">
    <property type="entry name" value="PNPOx_N"/>
    <property type="match status" value="1"/>
</dbReference>
<dbReference type="PIRSF" id="PIRSF000190">
    <property type="entry name" value="Pyd_amn-ph_oxd"/>
    <property type="match status" value="1"/>
</dbReference>
<dbReference type="SUPFAM" id="SSF50475">
    <property type="entry name" value="FMN-binding split barrel"/>
    <property type="match status" value="1"/>
</dbReference>
<dbReference type="PROSITE" id="PS01064">
    <property type="entry name" value="PYRIDOX_OXIDASE"/>
    <property type="match status" value="1"/>
</dbReference>
<name>PDXH_BRUME</name>
<keyword id="KW-0285">Flavoprotein</keyword>
<keyword id="KW-0288">FMN</keyword>
<keyword id="KW-0560">Oxidoreductase</keyword>
<keyword id="KW-0664">Pyridoxine biosynthesis</keyword>